<comment type="function">
    <text evidence="1">ATP-dependent kinase that could be involved in endoplasmic reticulum membrane assembly.</text>
</comment>
<comment type="similarity">
    <text evidence="2">Belongs to the YFH7 family.</text>
</comment>
<sequence>MVDVNRLKEEVIASYREICKENYRLLVFIVGPPGSGKSTIAEKLKDAINTSYLDYLKEIDRKTLRCENYNHINIDQFVQGIEGETISSALEDERHENFDSVENVDFICKKKRLKDGSYTITGRGGQLNAIKVRQPTSQEKNLEGNTTIAEVLPMDGFHLSRECLDHFSDPQWAHLRRGSSLTFDSNNFLKLCEIMAKTSRIFPSIGYDGDDFTAFDAISSSFDCSVPSVEVPGFDHSLKDPQPSQHTISFKSRIVIFEGLYLLYNKENWSKIYNIVSNSNAKLFYKILACEDQIESRVAKRHLKAGLVASIEDGKDKFRKNDLLNARDVEKNSISSEDIRLIRND</sequence>
<protein>
    <recommendedName>
        <fullName>ATP-dependent kinase YFH7</fullName>
        <ecNumber>2.7.1.-</ecNumber>
    </recommendedName>
</protein>
<organism>
    <name type="scientific">Candida glabrata (strain ATCC 2001 / BCRC 20586 / JCM 3761 / NBRC 0622 / NRRL Y-65 / CBS 138)</name>
    <name type="common">Yeast</name>
    <name type="synonym">Nakaseomyces glabratus</name>
    <dbReference type="NCBI Taxonomy" id="284593"/>
    <lineage>
        <taxon>Eukaryota</taxon>
        <taxon>Fungi</taxon>
        <taxon>Dikarya</taxon>
        <taxon>Ascomycota</taxon>
        <taxon>Saccharomycotina</taxon>
        <taxon>Saccharomycetes</taxon>
        <taxon>Saccharomycetales</taxon>
        <taxon>Saccharomycetaceae</taxon>
        <taxon>Nakaseomyces</taxon>
    </lineage>
</organism>
<proteinExistence type="inferred from homology"/>
<gene>
    <name type="primary">YFH7</name>
    <name type="ordered locus">CAGL0F02343g</name>
</gene>
<evidence type="ECO:0000250" key="1"/>
<evidence type="ECO:0000305" key="2"/>
<name>YFH7_CANGA</name>
<feature type="chain" id="PRO_0000404213" description="ATP-dependent kinase YFH7">
    <location>
        <begin position="1"/>
        <end position="345"/>
    </location>
</feature>
<feature type="binding site" evidence="1">
    <location>
        <begin position="31"/>
        <end position="39"/>
    </location>
    <ligand>
        <name>ATP</name>
        <dbReference type="ChEBI" id="CHEBI:30616"/>
    </ligand>
</feature>
<reference key="1">
    <citation type="journal article" date="2004" name="Nature">
        <title>Genome evolution in yeasts.</title>
        <authorList>
            <person name="Dujon B."/>
            <person name="Sherman D."/>
            <person name="Fischer G."/>
            <person name="Durrens P."/>
            <person name="Casaregola S."/>
            <person name="Lafontaine I."/>
            <person name="de Montigny J."/>
            <person name="Marck C."/>
            <person name="Neuveglise C."/>
            <person name="Talla E."/>
            <person name="Goffard N."/>
            <person name="Frangeul L."/>
            <person name="Aigle M."/>
            <person name="Anthouard V."/>
            <person name="Babour A."/>
            <person name="Barbe V."/>
            <person name="Barnay S."/>
            <person name="Blanchin S."/>
            <person name="Beckerich J.-M."/>
            <person name="Beyne E."/>
            <person name="Bleykasten C."/>
            <person name="Boisrame A."/>
            <person name="Boyer J."/>
            <person name="Cattolico L."/>
            <person name="Confanioleri F."/>
            <person name="de Daruvar A."/>
            <person name="Despons L."/>
            <person name="Fabre E."/>
            <person name="Fairhead C."/>
            <person name="Ferry-Dumazet H."/>
            <person name="Groppi A."/>
            <person name="Hantraye F."/>
            <person name="Hennequin C."/>
            <person name="Jauniaux N."/>
            <person name="Joyet P."/>
            <person name="Kachouri R."/>
            <person name="Kerrest A."/>
            <person name="Koszul R."/>
            <person name="Lemaire M."/>
            <person name="Lesur I."/>
            <person name="Ma L."/>
            <person name="Muller H."/>
            <person name="Nicaud J.-M."/>
            <person name="Nikolski M."/>
            <person name="Oztas S."/>
            <person name="Ozier-Kalogeropoulos O."/>
            <person name="Pellenz S."/>
            <person name="Potier S."/>
            <person name="Richard G.-F."/>
            <person name="Straub M.-L."/>
            <person name="Suleau A."/>
            <person name="Swennen D."/>
            <person name="Tekaia F."/>
            <person name="Wesolowski-Louvel M."/>
            <person name="Westhof E."/>
            <person name="Wirth B."/>
            <person name="Zeniou-Meyer M."/>
            <person name="Zivanovic Y."/>
            <person name="Bolotin-Fukuhara M."/>
            <person name="Thierry A."/>
            <person name="Bouchier C."/>
            <person name="Caudron B."/>
            <person name="Scarpelli C."/>
            <person name="Gaillardin C."/>
            <person name="Weissenbach J."/>
            <person name="Wincker P."/>
            <person name="Souciet J.-L."/>
        </authorList>
    </citation>
    <scope>NUCLEOTIDE SEQUENCE [LARGE SCALE GENOMIC DNA]</scope>
    <source>
        <strain>ATCC 2001 / BCRC 20586 / JCM 3761 / NBRC 0622 / NRRL Y-65 / CBS 138</strain>
    </source>
</reference>
<accession>Q6FUM2</accession>
<dbReference type="EC" id="2.7.1.-"/>
<dbReference type="EMBL" id="CR380952">
    <property type="protein sequence ID" value="CAG58996.1"/>
    <property type="molecule type" value="Genomic_DNA"/>
</dbReference>
<dbReference type="RefSeq" id="XP_446072.1">
    <property type="nucleotide sequence ID" value="XM_446072.1"/>
</dbReference>
<dbReference type="SMR" id="Q6FUM2"/>
<dbReference type="FunCoup" id="Q6FUM2">
    <property type="interactions" value="18"/>
</dbReference>
<dbReference type="STRING" id="284593.Q6FUM2"/>
<dbReference type="EnsemblFungi" id="CAGL0F02343g-T">
    <property type="protein sequence ID" value="CAGL0F02343g-T-p1"/>
    <property type="gene ID" value="CAGL0F02343g"/>
</dbReference>
<dbReference type="KEGG" id="cgr:2887809"/>
<dbReference type="CGD" id="CAL0131310">
    <property type="gene designation" value="CAGL0F02343g"/>
</dbReference>
<dbReference type="VEuPathDB" id="FungiDB:CAGL0F02343g"/>
<dbReference type="eggNOG" id="KOG2702">
    <property type="taxonomic scope" value="Eukaryota"/>
</dbReference>
<dbReference type="HOGENOM" id="CLU_067202_1_0_1"/>
<dbReference type="InParanoid" id="Q6FUM2"/>
<dbReference type="OMA" id="LYDQENW"/>
<dbReference type="Proteomes" id="UP000002428">
    <property type="component" value="Chromosome F"/>
</dbReference>
<dbReference type="GO" id="GO:0005524">
    <property type="term" value="F:ATP binding"/>
    <property type="evidence" value="ECO:0007669"/>
    <property type="project" value="UniProtKB-KW"/>
</dbReference>
<dbReference type="GO" id="GO:0016887">
    <property type="term" value="F:ATP hydrolysis activity"/>
    <property type="evidence" value="ECO:0007669"/>
    <property type="project" value="EnsemblFungi"/>
</dbReference>
<dbReference type="GO" id="GO:0016301">
    <property type="term" value="F:kinase activity"/>
    <property type="evidence" value="ECO:0007669"/>
    <property type="project" value="UniProtKB-KW"/>
</dbReference>
<dbReference type="Gene3D" id="3.40.50.300">
    <property type="entry name" value="P-loop containing nucleotide triphosphate hydrolases"/>
    <property type="match status" value="1"/>
</dbReference>
<dbReference type="InterPro" id="IPR027417">
    <property type="entry name" value="P-loop_NTPase"/>
</dbReference>
<dbReference type="PANTHER" id="PTHR10285">
    <property type="entry name" value="URIDINE KINASE"/>
    <property type="match status" value="1"/>
</dbReference>
<dbReference type="SUPFAM" id="SSF52540">
    <property type="entry name" value="P-loop containing nucleoside triphosphate hydrolases"/>
    <property type="match status" value="2"/>
</dbReference>
<keyword id="KW-0067">ATP-binding</keyword>
<keyword id="KW-0418">Kinase</keyword>
<keyword id="KW-0547">Nucleotide-binding</keyword>
<keyword id="KW-1185">Reference proteome</keyword>
<keyword id="KW-0808">Transferase</keyword>